<keyword id="KW-0067">ATP-binding</keyword>
<keyword id="KW-1003">Cell membrane</keyword>
<keyword id="KW-0963">Cytoplasm</keyword>
<keyword id="KW-0472">Membrane</keyword>
<keyword id="KW-0547">Nucleotide-binding</keyword>
<keyword id="KW-0653">Protein transport</keyword>
<keyword id="KW-1185">Reference proteome</keyword>
<keyword id="KW-1278">Translocase</keyword>
<keyword id="KW-0811">Translocation</keyword>
<keyword id="KW-0813">Transport</keyword>
<evidence type="ECO:0000255" key="1">
    <source>
        <dbReference type="HAMAP-Rule" id="MF_01382"/>
    </source>
</evidence>
<reference key="1">
    <citation type="journal article" date="2008" name="J. Bacteriol.">
        <title>Complete genome sequence of Leuconostoc citreum KM20.</title>
        <authorList>
            <person name="Kim J.F."/>
            <person name="Jeong H."/>
            <person name="Lee J.-S."/>
            <person name="Choi S.-H."/>
            <person name="Ha M."/>
            <person name="Hur C.-G."/>
            <person name="Kim J.-S."/>
            <person name="Lee S."/>
            <person name="Park H.-S."/>
            <person name="Park Y.-H."/>
            <person name="Oh T.K."/>
        </authorList>
    </citation>
    <scope>NUCLEOTIDE SEQUENCE [LARGE SCALE GENOMIC DNA]</scope>
    <source>
        <strain>KM20</strain>
    </source>
</reference>
<sequence length="804" mass="90737">MANPIRKLVDNSKKQLKKLNHIADKVEDYADEMAALSDEALQAKTPVFKEKIADALRDVTETDKQNKVLAKTLDALLPEAFAVAREAAKRVLGLYPFRVQIMGAAVLNDGNLAEMRTGEGKTLTATMAVYLNALTDRGVHVVTVNDYLSARDAEQMGQLYNWLGLSVGVNVGDAPAEEKRAAYDADITYSTNFNIGFDYLRDNMVRRAEERVMQRGLNFALIDEADSILIDTARTPLIISGPGSGVSQLYGRADRFVKTLQQDEDYKIDEEAKTTMLTNDGIHKGEIFFNLDNLYDAGDTALTHHIDQALRANFNYINDKDYVVQDGEVKLIDQSTGRISEGTRLSDGLHQAIEAKEGVEIQEENKSMAQITYQNLFRMYKKLSGMTGTAKTEEEELREIYNMEVITIPTNRPIKRVDYPDLLYPSIRAKYNAVVKLIQELHEKGQPILIGTGSVESSELLSKILMAQNVPHNVLNAKNNAKEAEIIANAGQRGAVTVATNMAGRGTDIKLGPGVADLGGLAVIATERHESRRIDNQLRGRAGRQGDDGFSQFFLSLEDDLMIRFGAERIRAVWERMNLDEEETVIKNRLITRSVESAQKRVEGNNYDTRKNVLQYDDVVREQRELIYHQRDIIIDESQSLDWVLMPMVSRTINRVVTVQTKSKKPSEWQLQQIIVFAENVLVNEGALTENDLSGLSREDIEAKLYALAKENYANKKRQLYEPEQMLEFEKVVILRAVDQHWTDHIDALDRLRQGVGLRGYGQLNPLIEYQNEAFENFNKMIADVEYDATRTFMKAEIRQNLKA</sequence>
<gene>
    <name evidence="1" type="primary">secA</name>
    <name type="ordered locus">LCK_01608</name>
</gene>
<organism>
    <name type="scientific">Leuconostoc citreum (strain KM20)</name>
    <dbReference type="NCBI Taxonomy" id="349519"/>
    <lineage>
        <taxon>Bacteria</taxon>
        <taxon>Bacillati</taxon>
        <taxon>Bacillota</taxon>
        <taxon>Bacilli</taxon>
        <taxon>Lactobacillales</taxon>
        <taxon>Lactobacillaceae</taxon>
        <taxon>Leuconostoc</taxon>
    </lineage>
</organism>
<comment type="function">
    <text evidence="1">Part of the Sec protein translocase complex. Interacts with the SecYEG preprotein conducting channel. Has a central role in coupling the hydrolysis of ATP to the transfer of proteins into and across the cell membrane, serving as an ATP-driven molecular motor driving the stepwise translocation of polypeptide chains across the membrane.</text>
</comment>
<comment type="catalytic activity">
    <reaction evidence="1">
        <text>ATP + H2O + cellular proteinSide 1 = ADP + phosphate + cellular proteinSide 2.</text>
        <dbReference type="EC" id="7.4.2.8"/>
    </reaction>
</comment>
<comment type="subunit">
    <text evidence="1">Monomer and homodimer. Part of the essential Sec protein translocation apparatus which comprises SecA, SecYEG and auxiliary proteins SecDF. Other proteins may also be involved.</text>
</comment>
<comment type="subcellular location">
    <subcellularLocation>
        <location evidence="1">Cell membrane</location>
        <topology evidence="1">Peripheral membrane protein</topology>
        <orientation evidence="1">Cytoplasmic side</orientation>
    </subcellularLocation>
    <subcellularLocation>
        <location evidence="1">Cytoplasm</location>
    </subcellularLocation>
    <text evidence="1">Distribution is 50-50.</text>
</comment>
<comment type="similarity">
    <text evidence="1">Belongs to the SecA family.</text>
</comment>
<accession>B1MW27</accession>
<dbReference type="EC" id="7.4.2.8" evidence="1"/>
<dbReference type="EMBL" id="DQ489736">
    <property type="protein sequence ID" value="ACA83431.1"/>
    <property type="molecule type" value="Genomic_DNA"/>
</dbReference>
<dbReference type="RefSeq" id="WP_012305437.1">
    <property type="nucleotide sequence ID" value="NC_010471.1"/>
</dbReference>
<dbReference type="SMR" id="B1MW27"/>
<dbReference type="STRING" id="349519.LCK_01608"/>
<dbReference type="KEGG" id="lci:LCK_01608"/>
<dbReference type="eggNOG" id="COG0653">
    <property type="taxonomic scope" value="Bacteria"/>
</dbReference>
<dbReference type="HOGENOM" id="CLU_005314_3_0_9"/>
<dbReference type="OrthoDB" id="9805579at2"/>
<dbReference type="Proteomes" id="UP000002166">
    <property type="component" value="Chromosome"/>
</dbReference>
<dbReference type="GO" id="GO:0031522">
    <property type="term" value="C:cell envelope Sec protein transport complex"/>
    <property type="evidence" value="ECO:0007669"/>
    <property type="project" value="TreeGrafter"/>
</dbReference>
<dbReference type="GO" id="GO:0005829">
    <property type="term" value="C:cytosol"/>
    <property type="evidence" value="ECO:0007669"/>
    <property type="project" value="TreeGrafter"/>
</dbReference>
<dbReference type="GO" id="GO:0005886">
    <property type="term" value="C:plasma membrane"/>
    <property type="evidence" value="ECO:0007669"/>
    <property type="project" value="UniProtKB-SubCell"/>
</dbReference>
<dbReference type="GO" id="GO:0005524">
    <property type="term" value="F:ATP binding"/>
    <property type="evidence" value="ECO:0007669"/>
    <property type="project" value="UniProtKB-UniRule"/>
</dbReference>
<dbReference type="GO" id="GO:0008564">
    <property type="term" value="F:protein-exporting ATPase activity"/>
    <property type="evidence" value="ECO:0007669"/>
    <property type="project" value="UniProtKB-EC"/>
</dbReference>
<dbReference type="GO" id="GO:0065002">
    <property type="term" value="P:intracellular protein transmembrane transport"/>
    <property type="evidence" value="ECO:0007669"/>
    <property type="project" value="UniProtKB-UniRule"/>
</dbReference>
<dbReference type="GO" id="GO:0017038">
    <property type="term" value="P:protein import"/>
    <property type="evidence" value="ECO:0007669"/>
    <property type="project" value="InterPro"/>
</dbReference>
<dbReference type="GO" id="GO:0006605">
    <property type="term" value="P:protein targeting"/>
    <property type="evidence" value="ECO:0007669"/>
    <property type="project" value="UniProtKB-UniRule"/>
</dbReference>
<dbReference type="GO" id="GO:0043952">
    <property type="term" value="P:protein transport by the Sec complex"/>
    <property type="evidence" value="ECO:0007669"/>
    <property type="project" value="TreeGrafter"/>
</dbReference>
<dbReference type="CDD" id="cd17928">
    <property type="entry name" value="DEXDc_SecA"/>
    <property type="match status" value="1"/>
</dbReference>
<dbReference type="CDD" id="cd18803">
    <property type="entry name" value="SF2_C_secA"/>
    <property type="match status" value="1"/>
</dbReference>
<dbReference type="FunFam" id="3.40.50.300:FF:000429">
    <property type="entry name" value="Preprotein translocase subunit SecA"/>
    <property type="match status" value="1"/>
</dbReference>
<dbReference type="Gene3D" id="1.10.3060.10">
    <property type="entry name" value="Helical scaffold and wing domains of SecA"/>
    <property type="match status" value="1"/>
</dbReference>
<dbReference type="Gene3D" id="3.40.50.300">
    <property type="entry name" value="P-loop containing nucleotide triphosphate hydrolases"/>
    <property type="match status" value="2"/>
</dbReference>
<dbReference type="Gene3D" id="3.90.1440.10">
    <property type="entry name" value="SecA, preprotein cross-linking domain"/>
    <property type="match status" value="1"/>
</dbReference>
<dbReference type="HAMAP" id="MF_01382">
    <property type="entry name" value="SecA"/>
    <property type="match status" value="1"/>
</dbReference>
<dbReference type="InterPro" id="IPR014001">
    <property type="entry name" value="Helicase_ATP-bd"/>
</dbReference>
<dbReference type="InterPro" id="IPR001650">
    <property type="entry name" value="Helicase_C-like"/>
</dbReference>
<dbReference type="InterPro" id="IPR027417">
    <property type="entry name" value="P-loop_NTPase"/>
</dbReference>
<dbReference type="InterPro" id="IPR000185">
    <property type="entry name" value="SecA"/>
</dbReference>
<dbReference type="InterPro" id="IPR020937">
    <property type="entry name" value="SecA_CS"/>
</dbReference>
<dbReference type="InterPro" id="IPR011115">
    <property type="entry name" value="SecA_DEAD"/>
</dbReference>
<dbReference type="InterPro" id="IPR014018">
    <property type="entry name" value="SecA_motor_DEAD"/>
</dbReference>
<dbReference type="InterPro" id="IPR011130">
    <property type="entry name" value="SecA_preprotein_X-link_dom"/>
</dbReference>
<dbReference type="InterPro" id="IPR044722">
    <property type="entry name" value="SecA_SF2_C"/>
</dbReference>
<dbReference type="InterPro" id="IPR011116">
    <property type="entry name" value="SecA_Wing/Scaffold"/>
</dbReference>
<dbReference type="InterPro" id="IPR036266">
    <property type="entry name" value="SecA_Wing/Scaffold_sf"/>
</dbReference>
<dbReference type="InterPro" id="IPR036670">
    <property type="entry name" value="SecA_X-link_sf"/>
</dbReference>
<dbReference type="NCBIfam" id="NF006630">
    <property type="entry name" value="PRK09200.1"/>
    <property type="match status" value="1"/>
</dbReference>
<dbReference type="NCBIfam" id="TIGR00963">
    <property type="entry name" value="secA"/>
    <property type="match status" value="1"/>
</dbReference>
<dbReference type="PANTHER" id="PTHR30612:SF0">
    <property type="entry name" value="CHLOROPLAST PROTEIN-TRANSPORTING ATPASE"/>
    <property type="match status" value="1"/>
</dbReference>
<dbReference type="PANTHER" id="PTHR30612">
    <property type="entry name" value="SECA INNER MEMBRANE COMPONENT OF SEC PROTEIN SECRETION SYSTEM"/>
    <property type="match status" value="1"/>
</dbReference>
<dbReference type="Pfam" id="PF21090">
    <property type="entry name" value="P-loop_SecA"/>
    <property type="match status" value="2"/>
</dbReference>
<dbReference type="Pfam" id="PF07517">
    <property type="entry name" value="SecA_DEAD"/>
    <property type="match status" value="1"/>
</dbReference>
<dbReference type="Pfam" id="PF01043">
    <property type="entry name" value="SecA_PP_bind"/>
    <property type="match status" value="1"/>
</dbReference>
<dbReference type="Pfam" id="PF07516">
    <property type="entry name" value="SecA_SW"/>
    <property type="match status" value="1"/>
</dbReference>
<dbReference type="PRINTS" id="PR00906">
    <property type="entry name" value="SECA"/>
</dbReference>
<dbReference type="SMART" id="SM00957">
    <property type="entry name" value="SecA_DEAD"/>
    <property type="match status" value="1"/>
</dbReference>
<dbReference type="SMART" id="SM00958">
    <property type="entry name" value="SecA_PP_bind"/>
    <property type="match status" value="1"/>
</dbReference>
<dbReference type="SUPFAM" id="SSF81886">
    <property type="entry name" value="Helical scaffold and wing domains of SecA"/>
    <property type="match status" value="1"/>
</dbReference>
<dbReference type="SUPFAM" id="SSF52540">
    <property type="entry name" value="P-loop containing nucleoside triphosphate hydrolases"/>
    <property type="match status" value="2"/>
</dbReference>
<dbReference type="SUPFAM" id="SSF81767">
    <property type="entry name" value="Pre-protein crosslinking domain of SecA"/>
    <property type="match status" value="1"/>
</dbReference>
<dbReference type="PROSITE" id="PS01312">
    <property type="entry name" value="SECA"/>
    <property type="match status" value="1"/>
</dbReference>
<dbReference type="PROSITE" id="PS51196">
    <property type="entry name" value="SECA_MOTOR_DEAD"/>
    <property type="match status" value="1"/>
</dbReference>
<feature type="chain" id="PRO_1000145031" description="Protein translocase subunit SecA">
    <location>
        <begin position="1"/>
        <end position="804"/>
    </location>
</feature>
<feature type="binding site" evidence="1">
    <location>
        <position position="100"/>
    </location>
    <ligand>
        <name>ATP</name>
        <dbReference type="ChEBI" id="CHEBI:30616"/>
    </ligand>
</feature>
<feature type="binding site" evidence="1">
    <location>
        <begin position="118"/>
        <end position="122"/>
    </location>
    <ligand>
        <name>ATP</name>
        <dbReference type="ChEBI" id="CHEBI:30616"/>
    </ligand>
</feature>
<feature type="binding site" evidence="1">
    <location>
        <position position="508"/>
    </location>
    <ligand>
        <name>ATP</name>
        <dbReference type="ChEBI" id="CHEBI:30616"/>
    </ligand>
</feature>
<protein>
    <recommendedName>
        <fullName evidence="1">Protein translocase subunit SecA</fullName>
        <ecNumber evidence="1">7.4.2.8</ecNumber>
    </recommendedName>
</protein>
<proteinExistence type="inferred from homology"/>
<name>SECA_LEUCK</name>